<feature type="chain" id="PRO_0000121903" description="tRNA pseudouridine synthase B">
    <location>
        <begin position="1"/>
        <end position="305"/>
    </location>
</feature>
<feature type="active site" description="Nucleophile" evidence="1">
    <location>
        <position position="39"/>
    </location>
</feature>
<accession>P65854</accession>
<accession>Q99UK1</accession>
<reference key="1">
    <citation type="journal article" date="2001" name="Lancet">
        <title>Whole genome sequencing of meticillin-resistant Staphylococcus aureus.</title>
        <authorList>
            <person name="Kuroda M."/>
            <person name="Ohta T."/>
            <person name="Uchiyama I."/>
            <person name="Baba T."/>
            <person name="Yuzawa H."/>
            <person name="Kobayashi I."/>
            <person name="Cui L."/>
            <person name="Oguchi A."/>
            <person name="Aoki K."/>
            <person name="Nagai Y."/>
            <person name="Lian J.-Q."/>
            <person name="Ito T."/>
            <person name="Kanamori M."/>
            <person name="Matsumaru H."/>
            <person name="Maruyama A."/>
            <person name="Murakami H."/>
            <person name="Hosoyama A."/>
            <person name="Mizutani-Ui Y."/>
            <person name="Takahashi N.K."/>
            <person name="Sawano T."/>
            <person name="Inoue R."/>
            <person name="Kaito C."/>
            <person name="Sekimizu K."/>
            <person name="Hirakawa H."/>
            <person name="Kuhara S."/>
            <person name="Goto S."/>
            <person name="Yabuzaki J."/>
            <person name="Kanehisa M."/>
            <person name="Yamashita A."/>
            <person name="Oshima K."/>
            <person name="Furuya K."/>
            <person name="Yoshino C."/>
            <person name="Shiba T."/>
            <person name="Hattori M."/>
            <person name="Ogasawara N."/>
            <person name="Hayashi H."/>
            <person name="Hiramatsu K."/>
        </authorList>
    </citation>
    <scope>NUCLEOTIDE SEQUENCE [LARGE SCALE GENOMIC DNA]</scope>
    <source>
        <strain>Mu50 / ATCC 700699</strain>
    </source>
</reference>
<dbReference type="EC" id="5.4.99.25" evidence="1"/>
<dbReference type="EMBL" id="BA000017">
    <property type="protein sequence ID" value="BAB57433.1"/>
    <property type="molecule type" value="Genomic_DNA"/>
</dbReference>
<dbReference type="RefSeq" id="WP_000282298.1">
    <property type="nucleotide sequence ID" value="NC_002758.2"/>
</dbReference>
<dbReference type="SMR" id="P65854"/>
<dbReference type="KEGG" id="sav:SAV1271"/>
<dbReference type="HOGENOM" id="CLU_032087_0_1_9"/>
<dbReference type="PhylomeDB" id="P65854"/>
<dbReference type="Proteomes" id="UP000002481">
    <property type="component" value="Chromosome"/>
</dbReference>
<dbReference type="GO" id="GO:0003723">
    <property type="term" value="F:RNA binding"/>
    <property type="evidence" value="ECO:0007669"/>
    <property type="project" value="InterPro"/>
</dbReference>
<dbReference type="GO" id="GO:0160148">
    <property type="term" value="F:tRNA pseudouridine(55) synthase activity"/>
    <property type="evidence" value="ECO:0007669"/>
    <property type="project" value="UniProtKB-EC"/>
</dbReference>
<dbReference type="GO" id="GO:1990481">
    <property type="term" value="P:mRNA pseudouridine synthesis"/>
    <property type="evidence" value="ECO:0007669"/>
    <property type="project" value="TreeGrafter"/>
</dbReference>
<dbReference type="GO" id="GO:0031119">
    <property type="term" value="P:tRNA pseudouridine synthesis"/>
    <property type="evidence" value="ECO:0007669"/>
    <property type="project" value="UniProtKB-UniRule"/>
</dbReference>
<dbReference type="CDD" id="cd02573">
    <property type="entry name" value="PseudoU_synth_EcTruB"/>
    <property type="match status" value="1"/>
</dbReference>
<dbReference type="FunFam" id="3.30.2350.10:FF:000011">
    <property type="entry name" value="tRNA pseudouridine synthase B"/>
    <property type="match status" value="1"/>
</dbReference>
<dbReference type="Gene3D" id="3.30.2350.10">
    <property type="entry name" value="Pseudouridine synthase"/>
    <property type="match status" value="1"/>
</dbReference>
<dbReference type="HAMAP" id="MF_01080">
    <property type="entry name" value="TruB_bact"/>
    <property type="match status" value="1"/>
</dbReference>
<dbReference type="InterPro" id="IPR020103">
    <property type="entry name" value="PsdUridine_synth_cat_dom_sf"/>
</dbReference>
<dbReference type="InterPro" id="IPR002501">
    <property type="entry name" value="PsdUridine_synth_N"/>
</dbReference>
<dbReference type="InterPro" id="IPR014780">
    <property type="entry name" value="tRNA_psdUridine_synth_TruB"/>
</dbReference>
<dbReference type="InterPro" id="IPR032819">
    <property type="entry name" value="TruB_C"/>
</dbReference>
<dbReference type="NCBIfam" id="TIGR00431">
    <property type="entry name" value="TruB"/>
    <property type="match status" value="1"/>
</dbReference>
<dbReference type="PANTHER" id="PTHR13767:SF2">
    <property type="entry name" value="PSEUDOURIDYLATE SYNTHASE TRUB1"/>
    <property type="match status" value="1"/>
</dbReference>
<dbReference type="PANTHER" id="PTHR13767">
    <property type="entry name" value="TRNA-PSEUDOURIDINE SYNTHASE"/>
    <property type="match status" value="1"/>
</dbReference>
<dbReference type="Pfam" id="PF16198">
    <property type="entry name" value="TruB_C_2"/>
    <property type="match status" value="1"/>
</dbReference>
<dbReference type="Pfam" id="PF01509">
    <property type="entry name" value="TruB_N"/>
    <property type="match status" value="1"/>
</dbReference>
<dbReference type="SUPFAM" id="SSF55120">
    <property type="entry name" value="Pseudouridine synthase"/>
    <property type="match status" value="1"/>
</dbReference>
<sequence>MYNGILPVYKERGLTSHDVVFKLRKILKTKKIGHTGTLDPEVAGVLPVCIGNATRVSDYVMDMGKAYEATVSIGRSTTTEDQTGDTLETKGVHSADFNKDDIDRLLENFKGVIEQIPPMYSSVKVNGKKLYEYARNNETVERPKRKVNIKDIGRISELDFKENECHFKIRVICGKGTYIRTLATDIGVKLGFPAHMSKLTRIESGGFVLKDSLTLEQIKELHEQDSLQNKLFPLEYGLKGLPSIKIKDSHIKKRILNGQKFNKNEFDNKIKDQIVFIDDDSEKVLAIYMVHPTKESEIKPKKVFN</sequence>
<protein>
    <recommendedName>
        <fullName evidence="1">tRNA pseudouridine synthase B</fullName>
        <ecNumber evidence="1">5.4.99.25</ecNumber>
    </recommendedName>
    <alternativeName>
        <fullName evidence="1">tRNA pseudouridine(55) synthase</fullName>
        <shortName evidence="1">Psi55 synthase</shortName>
    </alternativeName>
    <alternativeName>
        <fullName evidence="1">tRNA pseudouridylate synthase</fullName>
    </alternativeName>
    <alternativeName>
        <fullName evidence="1">tRNA-uridine isomerase</fullName>
    </alternativeName>
</protein>
<proteinExistence type="inferred from homology"/>
<organism>
    <name type="scientific">Staphylococcus aureus (strain Mu50 / ATCC 700699)</name>
    <dbReference type="NCBI Taxonomy" id="158878"/>
    <lineage>
        <taxon>Bacteria</taxon>
        <taxon>Bacillati</taxon>
        <taxon>Bacillota</taxon>
        <taxon>Bacilli</taxon>
        <taxon>Bacillales</taxon>
        <taxon>Staphylococcaceae</taxon>
        <taxon>Staphylococcus</taxon>
    </lineage>
</organism>
<comment type="function">
    <text evidence="1">Responsible for synthesis of pseudouridine from uracil-55 in the psi GC loop of transfer RNAs.</text>
</comment>
<comment type="catalytic activity">
    <reaction evidence="1">
        <text>uridine(55) in tRNA = pseudouridine(55) in tRNA</text>
        <dbReference type="Rhea" id="RHEA:42532"/>
        <dbReference type="Rhea" id="RHEA-COMP:10101"/>
        <dbReference type="Rhea" id="RHEA-COMP:10102"/>
        <dbReference type="ChEBI" id="CHEBI:65314"/>
        <dbReference type="ChEBI" id="CHEBI:65315"/>
        <dbReference type="EC" id="5.4.99.25"/>
    </reaction>
</comment>
<comment type="similarity">
    <text evidence="1">Belongs to the pseudouridine synthase TruB family. Type 1 subfamily.</text>
</comment>
<keyword id="KW-0413">Isomerase</keyword>
<keyword id="KW-0819">tRNA processing</keyword>
<evidence type="ECO:0000255" key="1">
    <source>
        <dbReference type="HAMAP-Rule" id="MF_01080"/>
    </source>
</evidence>
<name>TRUB_STAAM</name>
<gene>
    <name evidence="1" type="primary">truB</name>
    <name type="ordered locus">SAV1271</name>
</gene>